<proteinExistence type="inferred from homology"/>
<dbReference type="EC" id="3.5.1.96" evidence="1"/>
<dbReference type="EMBL" id="CP000880">
    <property type="protein sequence ID" value="ABX21563.1"/>
    <property type="molecule type" value="Genomic_DNA"/>
</dbReference>
<dbReference type="SMR" id="A9MFF8"/>
<dbReference type="STRING" id="41514.SARI_01672"/>
<dbReference type="KEGG" id="ses:SARI_01672"/>
<dbReference type="HOGENOM" id="CLU_071608_0_0_6"/>
<dbReference type="UniPathway" id="UPA00185">
    <property type="reaction ID" value="UER00283"/>
</dbReference>
<dbReference type="Proteomes" id="UP000002084">
    <property type="component" value="Chromosome"/>
</dbReference>
<dbReference type="GO" id="GO:0016788">
    <property type="term" value="F:hydrolase activity, acting on ester bonds"/>
    <property type="evidence" value="ECO:0007669"/>
    <property type="project" value="UniProtKB-UniRule"/>
</dbReference>
<dbReference type="GO" id="GO:0009017">
    <property type="term" value="F:succinylglutamate desuccinylase activity"/>
    <property type="evidence" value="ECO:0007669"/>
    <property type="project" value="UniProtKB-EC"/>
</dbReference>
<dbReference type="GO" id="GO:0008270">
    <property type="term" value="F:zinc ion binding"/>
    <property type="evidence" value="ECO:0007669"/>
    <property type="project" value="UniProtKB-UniRule"/>
</dbReference>
<dbReference type="GO" id="GO:0019544">
    <property type="term" value="P:arginine catabolic process to glutamate"/>
    <property type="evidence" value="ECO:0007669"/>
    <property type="project" value="UniProtKB-UniRule"/>
</dbReference>
<dbReference type="GO" id="GO:0019545">
    <property type="term" value="P:arginine catabolic process to succinate"/>
    <property type="evidence" value="ECO:0007669"/>
    <property type="project" value="UniProtKB-UniRule"/>
</dbReference>
<dbReference type="CDD" id="cd03855">
    <property type="entry name" value="M14_ASTE"/>
    <property type="match status" value="1"/>
</dbReference>
<dbReference type="FunFam" id="3.40.630.10:FF:000017">
    <property type="entry name" value="Succinylglutamate desuccinylase"/>
    <property type="match status" value="1"/>
</dbReference>
<dbReference type="Gene3D" id="3.40.630.10">
    <property type="entry name" value="Zn peptidases"/>
    <property type="match status" value="1"/>
</dbReference>
<dbReference type="HAMAP" id="MF_00767">
    <property type="entry name" value="Arg_catab_AstE"/>
    <property type="match status" value="1"/>
</dbReference>
<dbReference type="InterPro" id="IPR050178">
    <property type="entry name" value="AspA/AstE_fam"/>
</dbReference>
<dbReference type="InterPro" id="IPR055438">
    <property type="entry name" value="AstE_AspA_cat"/>
</dbReference>
<dbReference type="InterPro" id="IPR007036">
    <property type="entry name" value="Aste_AspA_hybrid_dom"/>
</dbReference>
<dbReference type="InterPro" id="IPR016681">
    <property type="entry name" value="SuccinylGlu_desuccinylase"/>
</dbReference>
<dbReference type="NCBIfam" id="TIGR03242">
    <property type="entry name" value="arg_catab_astE"/>
    <property type="match status" value="1"/>
</dbReference>
<dbReference type="NCBIfam" id="NF003706">
    <property type="entry name" value="PRK05324.1"/>
    <property type="match status" value="1"/>
</dbReference>
<dbReference type="PANTHER" id="PTHR15162">
    <property type="entry name" value="ASPARTOACYLASE"/>
    <property type="match status" value="1"/>
</dbReference>
<dbReference type="PANTHER" id="PTHR15162:SF7">
    <property type="entry name" value="SUCCINYLGLUTAMATE DESUCCINYLASE"/>
    <property type="match status" value="1"/>
</dbReference>
<dbReference type="Pfam" id="PF24827">
    <property type="entry name" value="AstE_AspA_cat"/>
    <property type="match status" value="1"/>
</dbReference>
<dbReference type="Pfam" id="PF04952">
    <property type="entry name" value="AstE_AspA_hybrid"/>
    <property type="match status" value="1"/>
</dbReference>
<dbReference type="PIRSF" id="PIRSF017020">
    <property type="entry name" value="AstE"/>
    <property type="match status" value="1"/>
</dbReference>
<dbReference type="SUPFAM" id="SSF53187">
    <property type="entry name" value="Zn-dependent exopeptidases"/>
    <property type="match status" value="1"/>
</dbReference>
<sequence>MDNFLSLTLTGETPRVTQGKGADFRWRWLGHGLLELTPNAPVDRALILSAGIHGNETAPVEMLDKLLSALYIGSLSLTWRVLVVFGNPQALAAGKRYCNSDMNRMFGRRWQSFAESDETRRARELELSLETFFSYEQARIRWHLDLHTAIRGSHHLRFGILPQRDRPWDTDFLAWLGAAGLEALVFHQAPGGTFTHFSTEHFGALSCTLELGKALPFGQNDLAQFSVTSQALSALLSGLETSTSSSPPLRYRVVSQITRHSDNFALYMDAQTLNFTAFTKGTLLAEEGDKRVTVTHDVEYVLFPNPAVACGLRAGLMLERLP</sequence>
<reference key="1">
    <citation type="submission" date="2007-11" db="EMBL/GenBank/DDBJ databases">
        <authorList>
            <consortium name="The Salmonella enterica serovar Arizonae Genome Sequencing Project"/>
            <person name="McClelland M."/>
            <person name="Sanderson E.K."/>
            <person name="Porwollik S."/>
            <person name="Spieth J."/>
            <person name="Clifton W.S."/>
            <person name="Fulton R."/>
            <person name="Chunyan W."/>
            <person name="Wollam A."/>
            <person name="Shah N."/>
            <person name="Pepin K."/>
            <person name="Bhonagiri V."/>
            <person name="Nash W."/>
            <person name="Johnson M."/>
            <person name="Thiruvilangam P."/>
            <person name="Wilson R."/>
        </authorList>
    </citation>
    <scope>NUCLEOTIDE SEQUENCE [LARGE SCALE GENOMIC DNA]</scope>
    <source>
        <strain>ATCC BAA-731 / CDC346-86 / RSK2980</strain>
    </source>
</reference>
<comment type="function">
    <text evidence="1">Transforms N(2)-succinylglutamate into succinate and glutamate.</text>
</comment>
<comment type="catalytic activity">
    <reaction evidence="1">
        <text>N-succinyl-L-glutamate + H2O = L-glutamate + succinate</text>
        <dbReference type="Rhea" id="RHEA:15169"/>
        <dbReference type="ChEBI" id="CHEBI:15377"/>
        <dbReference type="ChEBI" id="CHEBI:29985"/>
        <dbReference type="ChEBI" id="CHEBI:30031"/>
        <dbReference type="ChEBI" id="CHEBI:58763"/>
        <dbReference type="EC" id="3.5.1.96"/>
    </reaction>
</comment>
<comment type="cofactor">
    <cofactor evidence="1">
        <name>Zn(2+)</name>
        <dbReference type="ChEBI" id="CHEBI:29105"/>
    </cofactor>
    <text evidence="1">Binds 1 zinc ion per subunit.</text>
</comment>
<comment type="pathway">
    <text evidence="1">Amino-acid degradation; L-arginine degradation via AST pathway; L-glutamate and succinate from L-arginine: step 5/5.</text>
</comment>
<comment type="similarity">
    <text evidence="1">Belongs to the AspA/AstE family. Succinylglutamate desuccinylase subfamily.</text>
</comment>
<keyword id="KW-0056">Arginine metabolism</keyword>
<keyword id="KW-0378">Hydrolase</keyword>
<keyword id="KW-0479">Metal-binding</keyword>
<keyword id="KW-1185">Reference proteome</keyword>
<keyword id="KW-0862">Zinc</keyword>
<evidence type="ECO:0000255" key="1">
    <source>
        <dbReference type="HAMAP-Rule" id="MF_00767"/>
    </source>
</evidence>
<feature type="chain" id="PRO_1000083546" description="Succinylglutamate desuccinylase">
    <location>
        <begin position="1"/>
        <end position="322"/>
    </location>
</feature>
<feature type="active site" evidence="1">
    <location>
        <position position="210"/>
    </location>
</feature>
<feature type="binding site" evidence="1">
    <location>
        <position position="53"/>
    </location>
    <ligand>
        <name>Zn(2+)</name>
        <dbReference type="ChEBI" id="CHEBI:29105"/>
    </ligand>
</feature>
<feature type="binding site" evidence="1">
    <location>
        <position position="56"/>
    </location>
    <ligand>
        <name>Zn(2+)</name>
        <dbReference type="ChEBI" id="CHEBI:29105"/>
    </ligand>
</feature>
<feature type="binding site" evidence="1">
    <location>
        <position position="147"/>
    </location>
    <ligand>
        <name>Zn(2+)</name>
        <dbReference type="ChEBI" id="CHEBI:29105"/>
    </ligand>
</feature>
<gene>
    <name evidence="1" type="primary">astE</name>
    <name type="ordered locus">SARI_01672</name>
</gene>
<organism>
    <name type="scientific">Salmonella arizonae (strain ATCC BAA-731 / CDC346-86 / RSK2980)</name>
    <dbReference type="NCBI Taxonomy" id="41514"/>
    <lineage>
        <taxon>Bacteria</taxon>
        <taxon>Pseudomonadati</taxon>
        <taxon>Pseudomonadota</taxon>
        <taxon>Gammaproteobacteria</taxon>
        <taxon>Enterobacterales</taxon>
        <taxon>Enterobacteriaceae</taxon>
        <taxon>Salmonella</taxon>
    </lineage>
</organism>
<protein>
    <recommendedName>
        <fullName evidence="1">Succinylglutamate desuccinylase</fullName>
        <ecNumber evidence="1">3.5.1.96</ecNumber>
    </recommendedName>
</protein>
<accession>A9MFF8</accession>
<name>ASTE_SALAR</name>